<proteinExistence type="inferred from homology"/>
<protein>
    <recommendedName>
        <fullName evidence="1">Nucleotide-binding protein CMM_1747</fullName>
    </recommendedName>
</protein>
<keyword id="KW-0067">ATP-binding</keyword>
<keyword id="KW-0342">GTP-binding</keyword>
<keyword id="KW-0547">Nucleotide-binding</keyword>
<sequence>MSVEIPQQDVMIVTGMSGAGRSTVGNALEDLGWYVVDNLPPQMLKPLVELAGRAGTSLPKIAAVVDVRGGDFFSELRDILQTFGTGPRLRVLFLEATDAALVRRFEQVRRPHPLQGNGTLLDGIAAERARMIEIREASDLVIDTSELNIHQLATTITEQFSGADDAGVRVTVMSFGFKYGTPADADMVADMRFLPNPFWTPELRPLTGRDKAVSDYVLGQEGAEEFVHAYARALAPVLAGYQRENKRHATIAIGCTGGKHRSVAVSEELSSLLRALPGVAVSTKHRDLGRE</sequence>
<evidence type="ECO:0000255" key="1">
    <source>
        <dbReference type="HAMAP-Rule" id="MF_00636"/>
    </source>
</evidence>
<reference key="1">
    <citation type="journal article" date="2008" name="J. Bacteriol.">
        <title>The genome sequence of the tomato-pathogenic actinomycete Clavibacter michiganensis subsp. michiganensis NCPPB382 reveals a large island involved in pathogenicity.</title>
        <authorList>
            <person name="Gartemann K.-H."/>
            <person name="Abt B."/>
            <person name="Bekel T."/>
            <person name="Burger A."/>
            <person name="Engemann J."/>
            <person name="Fluegel M."/>
            <person name="Gaigalat L."/>
            <person name="Goesmann A."/>
            <person name="Graefen I."/>
            <person name="Kalinowski J."/>
            <person name="Kaup O."/>
            <person name="Kirchner O."/>
            <person name="Krause L."/>
            <person name="Linke B."/>
            <person name="McHardy A."/>
            <person name="Meyer F."/>
            <person name="Pohle S."/>
            <person name="Rueckert C."/>
            <person name="Schneiker S."/>
            <person name="Zellermann E.-M."/>
            <person name="Puehler A."/>
            <person name="Eichenlaub R."/>
            <person name="Kaiser O."/>
            <person name="Bartels D."/>
        </authorList>
    </citation>
    <scope>NUCLEOTIDE SEQUENCE [LARGE SCALE GENOMIC DNA]</scope>
    <source>
        <strain>NCPPB 382</strain>
    </source>
</reference>
<feature type="chain" id="PRO_0000383226" description="Nucleotide-binding protein CMM_1747">
    <location>
        <begin position="1"/>
        <end position="291"/>
    </location>
</feature>
<feature type="binding site" evidence="1">
    <location>
        <begin position="15"/>
        <end position="22"/>
    </location>
    <ligand>
        <name>ATP</name>
        <dbReference type="ChEBI" id="CHEBI:30616"/>
    </ligand>
</feature>
<feature type="binding site" evidence="1">
    <location>
        <begin position="66"/>
        <end position="69"/>
    </location>
    <ligand>
        <name>GTP</name>
        <dbReference type="ChEBI" id="CHEBI:37565"/>
    </ligand>
</feature>
<comment type="function">
    <text evidence="1">Displays ATPase and GTPase activities.</text>
</comment>
<comment type="similarity">
    <text evidence="1">Belongs to the RapZ-like family.</text>
</comment>
<name>Y1747_CLAM3</name>
<accession>A5CRU0</accession>
<organism>
    <name type="scientific">Clavibacter michiganensis subsp. michiganensis (strain NCPPB 382)</name>
    <dbReference type="NCBI Taxonomy" id="443906"/>
    <lineage>
        <taxon>Bacteria</taxon>
        <taxon>Bacillati</taxon>
        <taxon>Actinomycetota</taxon>
        <taxon>Actinomycetes</taxon>
        <taxon>Micrococcales</taxon>
        <taxon>Microbacteriaceae</taxon>
        <taxon>Clavibacter</taxon>
    </lineage>
</organism>
<dbReference type="EMBL" id="AM711867">
    <property type="protein sequence ID" value="CAN01803.1"/>
    <property type="molecule type" value="Genomic_DNA"/>
</dbReference>
<dbReference type="SMR" id="A5CRU0"/>
<dbReference type="KEGG" id="cmi:CMM_1747"/>
<dbReference type="eggNOG" id="COG1660">
    <property type="taxonomic scope" value="Bacteria"/>
</dbReference>
<dbReference type="HOGENOM" id="CLU_059558_0_0_11"/>
<dbReference type="OrthoDB" id="9784461at2"/>
<dbReference type="Proteomes" id="UP000001564">
    <property type="component" value="Chromosome"/>
</dbReference>
<dbReference type="GO" id="GO:0005524">
    <property type="term" value="F:ATP binding"/>
    <property type="evidence" value="ECO:0007669"/>
    <property type="project" value="UniProtKB-UniRule"/>
</dbReference>
<dbReference type="GO" id="GO:0005525">
    <property type="term" value="F:GTP binding"/>
    <property type="evidence" value="ECO:0007669"/>
    <property type="project" value="UniProtKB-UniRule"/>
</dbReference>
<dbReference type="Gene3D" id="3.40.50.300">
    <property type="entry name" value="P-loop containing nucleotide triphosphate hydrolases"/>
    <property type="match status" value="1"/>
</dbReference>
<dbReference type="HAMAP" id="MF_00636">
    <property type="entry name" value="RapZ_like"/>
    <property type="match status" value="1"/>
</dbReference>
<dbReference type="InterPro" id="IPR027417">
    <property type="entry name" value="P-loop_NTPase"/>
</dbReference>
<dbReference type="InterPro" id="IPR005337">
    <property type="entry name" value="RapZ-like"/>
</dbReference>
<dbReference type="InterPro" id="IPR053930">
    <property type="entry name" value="RapZ-like_N"/>
</dbReference>
<dbReference type="InterPro" id="IPR053931">
    <property type="entry name" value="RapZ_C"/>
</dbReference>
<dbReference type="NCBIfam" id="NF003828">
    <property type="entry name" value="PRK05416.1"/>
    <property type="match status" value="1"/>
</dbReference>
<dbReference type="PANTHER" id="PTHR30448">
    <property type="entry name" value="RNASE ADAPTER PROTEIN RAPZ"/>
    <property type="match status" value="1"/>
</dbReference>
<dbReference type="PANTHER" id="PTHR30448:SF0">
    <property type="entry name" value="RNASE ADAPTER PROTEIN RAPZ"/>
    <property type="match status" value="1"/>
</dbReference>
<dbReference type="Pfam" id="PF22740">
    <property type="entry name" value="PapZ_C"/>
    <property type="match status" value="1"/>
</dbReference>
<dbReference type="Pfam" id="PF03668">
    <property type="entry name" value="RapZ-like_N"/>
    <property type="match status" value="1"/>
</dbReference>
<dbReference type="PIRSF" id="PIRSF005052">
    <property type="entry name" value="P-loopkin"/>
    <property type="match status" value="1"/>
</dbReference>
<dbReference type="SUPFAM" id="SSF52540">
    <property type="entry name" value="P-loop containing nucleoside triphosphate hydrolases"/>
    <property type="match status" value="1"/>
</dbReference>
<gene>
    <name type="ordered locus">CMM_1747</name>
</gene>